<feature type="chain" id="PRO_0000353319" description="DNA-directed RNA polymerase subunit beta'">
    <location>
        <begin position="1"/>
        <end position="1163"/>
    </location>
</feature>
<feature type="binding site" evidence="1">
    <location>
        <position position="59"/>
    </location>
    <ligand>
        <name>Zn(2+)</name>
        <dbReference type="ChEBI" id="CHEBI:29105"/>
        <label>1</label>
    </ligand>
</feature>
<feature type="binding site" evidence="1">
    <location>
        <position position="61"/>
    </location>
    <ligand>
        <name>Zn(2+)</name>
        <dbReference type="ChEBI" id="CHEBI:29105"/>
        <label>1</label>
    </ligand>
</feature>
<feature type="binding site" evidence="1">
    <location>
        <position position="74"/>
    </location>
    <ligand>
        <name>Zn(2+)</name>
        <dbReference type="ChEBI" id="CHEBI:29105"/>
        <label>1</label>
    </ligand>
</feature>
<feature type="binding site" evidence="1">
    <location>
        <position position="77"/>
    </location>
    <ligand>
        <name>Zn(2+)</name>
        <dbReference type="ChEBI" id="CHEBI:29105"/>
        <label>1</label>
    </ligand>
</feature>
<feature type="binding site" evidence="1">
    <location>
        <position position="449"/>
    </location>
    <ligand>
        <name>Mg(2+)</name>
        <dbReference type="ChEBI" id="CHEBI:18420"/>
    </ligand>
</feature>
<feature type="binding site" evidence="1">
    <location>
        <position position="451"/>
    </location>
    <ligand>
        <name>Mg(2+)</name>
        <dbReference type="ChEBI" id="CHEBI:18420"/>
    </ligand>
</feature>
<feature type="binding site" evidence="1">
    <location>
        <position position="453"/>
    </location>
    <ligand>
        <name>Mg(2+)</name>
        <dbReference type="ChEBI" id="CHEBI:18420"/>
    </ligand>
</feature>
<feature type="binding site" evidence="1">
    <location>
        <position position="794"/>
    </location>
    <ligand>
        <name>Zn(2+)</name>
        <dbReference type="ChEBI" id="CHEBI:29105"/>
        <label>2</label>
    </ligand>
</feature>
<feature type="binding site" evidence="1">
    <location>
        <position position="868"/>
    </location>
    <ligand>
        <name>Zn(2+)</name>
        <dbReference type="ChEBI" id="CHEBI:29105"/>
        <label>2</label>
    </ligand>
</feature>
<feature type="binding site" evidence="1">
    <location>
        <position position="875"/>
    </location>
    <ligand>
        <name>Zn(2+)</name>
        <dbReference type="ChEBI" id="CHEBI:29105"/>
        <label>2</label>
    </ligand>
</feature>
<feature type="binding site" evidence="1">
    <location>
        <position position="878"/>
    </location>
    <ligand>
        <name>Zn(2+)</name>
        <dbReference type="ChEBI" id="CHEBI:29105"/>
        <label>2</label>
    </ligand>
</feature>
<organism>
    <name type="scientific">Caldicellulosiruptor saccharolyticus (strain ATCC 43494 / DSM 8903 / Tp8T 6331)</name>
    <dbReference type="NCBI Taxonomy" id="351627"/>
    <lineage>
        <taxon>Bacteria</taxon>
        <taxon>Bacillati</taxon>
        <taxon>Bacillota</taxon>
        <taxon>Bacillota incertae sedis</taxon>
        <taxon>Caldicellulosiruptorales</taxon>
        <taxon>Caldicellulosiruptoraceae</taxon>
        <taxon>Caldicellulosiruptor</taxon>
    </lineage>
</organism>
<proteinExistence type="inferred from homology"/>
<keyword id="KW-0240">DNA-directed RNA polymerase</keyword>
<keyword id="KW-0460">Magnesium</keyword>
<keyword id="KW-0479">Metal-binding</keyword>
<keyword id="KW-0548">Nucleotidyltransferase</keyword>
<keyword id="KW-0804">Transcription</keyword>
<keyword id="KW-0808">Transferase</keyword>
<keyword id="KW-0862">Zinc</keyword>
<name>RPOC_CALS8</name>
<sequence length="1163" mass="130684">MDLFNFDAIKISLASPEKIREWSRGEVKKPETINYRTLKPEKDGLFCEKIFGPTKDWECHCGKYKKVKYKGVVCDKCGVEVTKSKVRRERMGHIELAAPVSHIWYFKGVPSRMGLILDMTPRNLEKVLYFAAYVVIDPGDVPNLEKKQILSEKEYRELKEKYGDRFRAGMGAEAIKELLKEIDLDKLSQELRQELETATGQKKLKIIKRLEVVEAFRKSGNRPEWMILDVIPVIPPELRPMVQLDGGRFATSDLNDLYRRVINRNNRLKKLMELGAPDIIIRNEKRMLQEAVDALIDNGRRGRPVTGPGNRPLKSLSDMLKGKQGRFRQNLLGKRVDYSGRSVIVVGPELKIYQCGLPKEMALELFKPFVMKKLVEKGICNNIKNAKKAVERQRSEVWDILEEVIKDHPVLLNRAPTLHRLGIQAFEPVLVEGRAIRLHPLVCTAYNADFDGDQMAVHVPLSAEAQAEARFLMLSANNLLKPADGKPIVVPTQDMVLGIYYLTLEKKGDKGEGKIFSSEDEALLAYEHKVVGLHARIKVRRTIEKDGEVVSGIVETTPGKIILNQVIPQDLGFVDRSKKENLLKYEIDTLVDKKMLGKIIDRCIKVYGTTRTAEILDEIKELGFRFSTRGAITISVSDMVIPEVKQKLIAEAEQKVENIEKLYRHGLISDEERYEQVISIWNETKDKLTEELIQNLDEFNPIFMMASSGARGSKNQISQLAGMRGLMANPSGKTIEMPIKSNFREGLNVIEFFISTHGARKGLADTALRTADSGYLTRRLVDVAQDIIVREEDCGTEKGIEVSEIRDGTEVIETLEERIIGRYAAKDIINEKTGEVIVKRNELITEEIAKKIVDAGEKSVYVRSVLECKTRYGVCTKCYGLDLGTGQPVNVGEAVGIIAAQAIGEPGTQLTMRTFHTGGIAGQDITQGLPRVEELFEARKPKGVAIISEIEGYVSIKEDKKRTITVRNDNGEERTYEVPYGARLKVNDGDYVKAGDELTEGSINPHDLLRIKGPRGVQSYLLAEVQKVYKMQGVDINDKHIEIIIRQMMKKVKIEDPGDTELLPGDIVEIYRFEEENDRAIAEGKRPALGRRVLLGITKAALSTESFLSAASFQETTRVLTDAAIKGKVDPLIGLKENVIIGKLIPAGTGMAKYRNIIVEEKA</sequence>
<evidence type="ECO:0000255" key="1">
    <source>
        <dbReference type="HAMAP-Rule" id="MF_01322"/>
    </source>
</evidence>
<dbReference type="EC" id="2.7.7.6" evidence="1"/>
<dbReference type="EMBL" id="CP000679">
    <property type="protein sequence ID" value="ABP66566.2"/>
    <property type="molecule type" value="Genomic_DNA"/>
</dbReference>
<dbReference type="RefSeq" id="WP_011916512.1">
    <property type="nucleotide sequence ID" value="NC_009437.1"/>
</dbReference>
<dbReference type="SMR" id="A4XI31"/>
<dbReference type="STRING" id="351627.Csac_0952"/>
<dbReference type="KEGG" id="csc:Csac_0952"/>
<dbReference type="eggNOG" id="COG0086">
    <property type="taxonomic scope" value="Bacteria"/>
</dbReference>
<dbReference type="HOGENOM" id="CLU_000524_3_0_9"/>
<dbReference type="OrthoDB" id="9815296at2"/>
<dbReference type="Proteomes" id="UP000000256">
    <property type="component" value="Chromosome"/>
</dbReference>
<dbReference type="GO" id="GO:0000428">
    <property type="term" value="C:DNA-directed RNA polymerase complex"/>
    <property type="evidence" value="ECO:0007669"/>
    <property type="project" value="UniProtKB-KW"/>
</dbReference>
<dbReference type="GO" id="GO:0003677">
    <property type="term" value="F:DNA binding"/>
    <property type="evidence" value="ECO:0007669"/>
    <property type="project" value="UniProtKB-UniRule"/>
</dbReference>
<dbReference type="GO" id="GO:0003899">
    <property type="term" value="F:DNA-directed RNA polymerase activity"/>
    <property type="evidence" value="ECO:0007669"/>
    <property type="project" value="UniProtKB-UniRule"/>
</dbReference>
<dbReference type="GO" id="GO:0000287">
    <property type="term" value="F:magnesium ion binding"/>
    <property type="evidence" value="ECO:0007669"/>
    <property type="project" value="UniProtKB-UniRule"/>
</dbReference>
<dbReference type="GO" id="GO:0008270">
    <property type="term" value="F:zinc ion binding"/>
    <property type="evidence" value="ECO:0007669"/>
    <property type="project" value="UniProtKB-UniRule"/>
</dbReference>
<dbReference type="GO" id="GO:0006351">
    <property type="term" value="P:DNA-templated transcription"/>
    <property type="evidence" value="ECO:0007669"/>
    <property type="project" value="UniProtKB-UniRule"/>
</dbReference>
<dbReference type="CDD" id="cd02655">
    <property type="entry name" value="RNAP_beta'_C"/>
    <property type="match status" value="1"/>
</dbReference>
<dbReference type="CDD" id="cd01609">
    <property type="entry name" value="RNAP_beta'_N"/>
    <property type="match status" value="1"/>
</dbReference>
<dbReference type="FunFam" id="1.10.150.390:FF:000002">
    <property type="entry name" value="DNA-directed RNA polymerase subunit beta"/>
    <property type="match status" value="1"/>
</dbReference>
<dbReference type="FunFam" id="4.10.860.120:FF:000001">
    <property type="entry name" value="DNA-directed RNA polymerase subunit beta"/>
    <property type="match status" value="1"/>
</dbReference>
<dbReference type="Gene3D" id="1.10.132.30">
    <property type="match status" value="1"/>
</dbReference>
<dbReference type="Gene3D" id="1.10.150.390">
    <property type="match status" value="1"/>
</dbReference>
<dbReference type="Gene3D" id="1.10.1790.20">
    <property type="match status" value="1"/>
</dbReference>
<dbReference type="Gene3D" id="1.10.40.90">
    <property type="match status" value="1"/>
</dbReference>
<dbReference type="Gene3D" id="2.40.40.20">
    <property type="match status" value="1"/>
</dbReference>
<dbReference type="Gene3D" id="2.40.50.100">
    <property type="match status" value="1"/>
</dbReference>
<dbReference type="Gene3D" id="4.10.860.120">
    <property type="entry name" value="RNA polymerase II, clamp domain"/>
    <property type="match status" value="1"/>
</dbReference>
<dbReference type="Gene3D" id="1.10.274.100">
    <property type="entry name" value="RNA polymerase Rpb1, domain 3"/>
    <property type="match status" value="1"/>
</dbReference>
<dbReference type="HAMAP" id="MF_01322">
    <property type="entry name" value="RNApol_bact_RpoC"/>
    <property type="match status" value="1"/>
</dbReference>
<dbReference type="InterPro" id="IPR045867">
    <property type="entry name" value="DNA-dir_RpoC_beta_prime"/>
</dbReference>
<dbReference type="InterPro" id="IPR012754">
    <property type="entry name" value="DNA-dir_RpoC_beta_prime_bact"/>
</dbReference>
<dbReference type="InterPro" id="IPR000722">
    <property type="entry name" value="RNA_pol_asu"/>
</dbReference>
<dbReference type="InterPro" id="IPR006592">
    <property type="entry name" value="RNA_pol_N"/>
</dbReference>
<dbReference type="InterPro" id="IPR007080">
    <property type="entry name" value="RNA_pol_Rpb1_1"/>
</dbReference>
<dbReference type="InterPro" id="IPR007066">
    <property type="entry name" value="RNA_pol_Rpb1_3"/>
</dbReference>
<dbReference type="InterPro" id="IPR042102">
    <property type="entry name" value="RNA_pol_Rpb1_3_sf"/>
</dbReference>
<dbReference type="InterPro" id="IPR007083">
    <property type="entry name" value="RNA_pol_Rpb1_4"/>
</dbReference>
<dbReference type="InterPro" id="IPR007081">
    <property type="entry name" value="RNA_pol_Rpb1_5"/>
</dbReference>
<dbReference type="InterPro" id="IPR044893">
    <property type="entry name" value="RNA_pol_Rpb1_clamp_domain"/>
</dbReference>
<dbReference type="InterPro" id="IPR038120">
    <property type="entry name" value="Rpb1_funnel_sf"/>
</dbReference>
<dbReference type="NCBIfam" id="NF011498">
    <property type="entry name" value="PRK14906.1"/>
    <property type="match status" value="1"/>
</dbReference>
<dbReference type="NCBIfam" id="TIGR02386">
    <property type="entry name" value="rpoC_TIGR"/>
    <property type="match status" value="1"/>
</dbReference>
<dbReference type="PANTHER" id="PTHR19376">
    <property type="entry name" value="DNA-DIRECTED RNA POLYMERASE"/>
    <property type="match status" value="1"/>
</dbReference>
<dbReference type="PANTHER" id="PTHR19376:SF54">
    <property type="entry name" value="DNA-DIRECTED RNA POLYMERASE SUBUNIT BETA"/>
    <property type="match status" value="1"/>
</dbReference>
<dbReference type="Pfam" id="PF04997">
    <property type="entry name" value="RNA_pol_Rpb1_1"/>
    <property type="match status" value="1"/>
</dbReference>
<dbReference type="Pfam" id="PF00623">
    <property type="entry name" value="RNA_pol_Rpb1_2"/>
    <property type="match status" value="2"/>
</dbReference>
<dbReference type="Pfam" id="PF04983">
    <property type="entry name" value="RNA_pol_Rpb1_3"/>
    <property type="match status" value="1"/>
</dbReference>
<dbReference type="Pfam" id="PF05000">
    <property type="entry name" value="RNA_pol_Rpb1_4"/>
    <property type="match status" value="1"/>
</dbReference>
<dbReference type="Pfam" id="PF04998">
    <property type="entry name" value="RNA_pol_Rpb1_5"/>
    <property type="match status" value="1"/>
</dbReference>
<dbReference type="SMART" id="SM00663">
    <property type="entry name" value="RPOLA_N"/>
    <property type="match status" value="1"/>
</dbReference>
<dbReference type="SUPFAM" id="SSF64484">
    <property type="entry name" value="beta and beta-prime subunits of DNA dependent RNA-polymerase"/>
    <property type="match status" value="1"/>
</dbReference>
<accession>A4XI31</accession>
<comment type="function">
    <text evidence="1">DNA-dependent RNA polymerase catalyzes the transcription of DNA into RNA using the four ribonucleoside triphosphates as substrates.</text>
</comment>
<comment type="catalytic activity">
    <reaction evidence="1">
        <text>RNA(n) + a ribonucleoside 5'-triphosphate = RNA(n+1) + diphosphate</text>
        <dbReference type="Rhea" id="RHEA:21248"/>
        <dbReference type="Rhea" id="RHEA-COMP:14527"/>
        <dbReference type="Rhea" id="RHEA-COMP:17342"/>
        <dbReference type="ChEBI" id="CHEBI:33019"/>
        <dbReference type="ChEBI" id="CHEBI:61557"/>
        <dbReference type="ChEBI" id="CHEBI:140395"/>
        <dbReference type="EC" id="2.7.7.6"/>
    </reaction>
</comment>
<comment type="cofactor">
    <cofactor evidence="1">
        <name>Mg(2+)</name>
        <dbReference type="ChEBI" id="CHEBI:18420"/>
    </cofactor>
    <text evidence="1">Binds 1 Mg(2+) ion per subunit.</text>
</comment>
<comment type="cofactor">
    <cofactor evidence="1">
        <name>Zn(2+)</name>
        <dbReference type="ChEBI" id="CHEBI:29105"/>
    </cofactor>
    <text evidence="1">Binds 2 Zn(2+) ions per subunit.</text>
</comment>
<comment type="subunit">
    <text evidence="1">The RNAP catalytic core consists of 2 alpha, 1 beta, 1 beta' and 1 omega subunit. When a sigma factor is associated with the core the holoenzyme is formed, which can initiate transcription.</text>
</comment>
<comment type="similarity">
    <text evidence="1">Belongs to the RNA polymerase beta' chain family.</text>
</comment>
<reference key="1">
    <citation type="submission" date="2007-04" db="EMBL/GenBank/DDBJ databases">
        <title>Genome sequence of the thermophilic hydrogen-producing bacterium Caldicellulosiruptor saccharolyticus DSM 8903.</title>
        <authorList>
            <person name="Copeland A."/>
            <person name="Lucas S."/>
            <person name="Lapidus A."/>
            <person name="Barry K."/>
            <person name="Detter J.C."/>
            <person name="Glavina del Rio T."/>
            <person name="Hammon N."/>
            <person name="Israni S."/>
            <person name="Dalin E."/>
            <person name="Tice H."/>
            <person name="Pitluck S."/>
            <person name="Kiss H."/>
            <person name="Brettin T."/>
            <person name="Bruce D."/>
            <person name="Han C."/>
            <person name="Schmutz J."/>
            <person name="Larimer F."/>
            <person name="Land M."/>
            <person name="Hauser L."/>
            <person name="Kyrpides N."/>
            <person name="Lykidis A."/>
            <person name="van de Werken H.J.G."/>
            <person name="Verhaart M.R.A."/>
            <person name="VanFossen A.L."/>
            <person name="Lewis D.L."/>
            <person name="Nichols J.D."/>
            <person name="Goorissen H.P."/>
            <person name="van Niel E.W.J."/>
            <person name="Stams F.J.M."/>
            <person name="Willquist K.U."/>
            <person name="Ward D.E."/>
            <person name="van der Oost J."/>
            <person name="Kelly R.M."/>
            <person name="Kengen S.M.W."/>
            <person name="Richardson P."/>
        </authorList>
    </citation>
    <scope>NUCLEOTIDE SEQUENCE [LARGE SCALE GENOMIC DNA]</scope>
    <source>
        <strain>ATCC 43494 / DSM 8903 / Tp8T 6331</strain>
    </source>
</reference>
<gene>
    <name evidence="1" type="primary">rpoC</name>
    <name type="ordered locus">Csac_0952</name>
</gene>
<protein>
    <recommendedName>
        <fullName evidence="1">DNA-directed RNA polymerase subunit beta'</fullName>
        <shortName evidence="1">RNAP subunit beta'</shortName>
        <ecNumber evidence="1">2.7.7.6</ecNumber>
    </recommendedName>
    <alternativeName>
        <fullName evidence="1">RNA polymerase subunit beta'</fullName>
    </alternativeName>
    <alternativeName>
        <fullName evidence="1">Transcriptase subunit beta'</fullName>
    </alternativeName>
</protein>